<dbReference type="EMBL" id="GU293068">
    <property type="protein sequence ID" value="ADB56884.1"/>
    <property type="molecule type" value="Genomic_DNA"/>
</dbReference>
<dbReference type="SMR" id="D2Y2J1"/>
<dbReference type="ArachnoServer" id="AS001950">
    <property type="toxin name" value="U4-theraphotoxin-Hhn1j"/>
</dbReference>
<dbReference type="GO" id="GO:0005576">
    <property type="term" value="C:extracellular region"/>
    <property type="evidence" value="ECO:0007669"/>
    <property type="project" value="UniProtKB-SubCell"/>
</dbReference>
<dbReference type="GO" id="GO:0035792">
    <property type="term" value="C:host cell postsynaptic membrane"/>
    <property type="evidence" value="ECO:0007669"/>
    <property type="project" value="UniProtKB-KW"/>
</dbReference>
<dbReference type="GO" id="GO:0090729">
    <property type="term" value="F:toxin activity"/>
    <property type="evidence" value="ECO:0007669"/>
    <property type="project" value="UniProtKB-KW"/>
</dbReference>
<dbReference type="InterPro" id="IPR012625">
    <property type="entry name" value="Hwtx-2-like"/>
</dbReference>
<dbReference type="Pfam" id="PF08089">
    <property type="entry name" value="Toxin_20"/>
    <property type="match status" value="1"/>
</dbReference>
<dbReference type="SUPFAM" id="SSF57059">
    <property type="entry name" value="omega toxin-like"/>
    <property type="match status" value="1"/>
</dbReference>
<dbReference type="PROSITE" id="PS60022">
    <property type="entry name" value="HWTX_2"/>
    <property type="match status" value="1"/>
</dbReference>
<sequence>MKVTLIAILTCAAVLVLHTTAAEELEAESQLMEVGMPDTELAAVDEERLFECSVSCEIGKEGNKDCKKKKCKGGWKCKFNMCVKV</sequence>
<proteinExistence type="inferred from homology"/>
<reference key="1">
    <citation type="journal article" date="2010" name="J. Proteome Res.">
        <title>Molecular diversification of peptide toxins from the tarantula Haplopelma hainanum (Ornithoctonus hainana) venom based on transcriptomic, peptidomic, and genomic analyses.</title>
        <authorList>
            <person name="Tang X."/>
            <person name="Zhang Y."/>
            <person name="Hu W."/>
            <person name="Xu D."/>
            <person name="Tao H."/>
            <person name="Yang X."/>
            <person name="Li Y."/>
            <person name="Jiang L."/>
            <person name="Liang S."/>
        </authorList>
    </citation>
    <scope>NUCLEOTIDE SEQUENCE [LARGE SCALE GENOMIC DNA]</scope>
    <source>
        <tissue>Venom gland</tissue>
    </source>
</reference>
<name>H2R01_CYRHA</name>
<comment type="function">
    <text evidence="1">Postsynaptic neurotoxin.</text>
</comment>
<comment type="subcellular location">
    <subcellularLocation>
        <location evidence="1">Secreted</location>
    </subcellularLocation>
</comment>
<comment type="tissue specificity">
    <text>Expressed by the venom gland.</text>
</comment>
<comment type="similarity">
    <text evidence="3">Belongs to the neurotoxin 12 (Hwtx-2) family. 02 (Hwtx-2) subfamily.</text>
</comment>
<evidence type="ECO:0000250" key="1"/>
<evidence type="ECO:0000255" key="2"/>
<evidence type="ECO:0000305" key="3"/>
<feature type="signal peptide" evidence="2">
    <location>
        <begin position="1"/>
        <end position="22"/>
    </location>
</feature>
<feature type="propeptide" id="PRO_0000400803" evidence="1">
    <location>
        <begin position="23"/>
        <end position="48"/>
    </location>
</feature>
<feature type="peptide" id="PRO_0000400804" description="U4-theraphotoxin-Hhn1j">
    <location>
        <begin position="49"/>
        <end position="85"/>
    </location>
</feature>
<feature type="disulfide bond" evidence="1">
    <location>
        <begin position="52"/>
        <end position="66"/>
    </location>
</feature>
<feature type="disulfide bond" evidence="1">
    <location>
        <begin position="56"/>
        <end position="77"/>
    </location>
</feature>
<feature type="disulfide bond" evidence="1">
    <location>
        <begin position="71"/>
        <end position="82"/>
    </location>
</feature>
<protein>
    <recommendedName>
        <fullName>U4-theraphotoxin-Hhn1j</fullName>
        <shortName>U4-TRTX-Hhn1j</shortName>
    </recommendedName>
    <alternativeName>
        <fullName>Hainantoxin-II-18</fullName>
        <shortName>HNTX-II-18</shortName>
    </alternativeName>
</protein>
<organism>
    <name type="scientific">Cyriopagopus hainanus</name>
    <name type="common">Chinese bird spider</name>
    <name type="synonym">Haplopelma hainanum</name>
    <dbReference type="NCBI Taxonomy" id="209901"/>
    <lineage>
        <taxon>Eukaryota</taxon>
        <taxon>Metazoa</taxon>
        <taxon>Ecdysozoa</taxon>
        <taxon>Arthropoda</taxon>
        <taxon>Chelicerata</taxon>
        <taxon>Arachnida</taxon>
        <taxon>Araneae</taxon>
        <taxon>Mygalomorphae</taxon>
        <taxon>Theraphosidae</taxon>
        <taxon>Haplopelma</taxon>
    </lineage>
</organism>
<keyword id="KW-1015">Disulfide bond</keyword>
<keyword id="KW-0528">Neurotoxin</keyword>
<keyword id="KW-0629">Postsynaptic neurotoxin</keyword>
<keyword id="KW-0964">Secreted</keyword>
<keyword id="KW-0732">Signal</keyword>
<keyword id="KW-0800">Toxin</keyword>
<accession>D2Y2J1</accession>